<dbReference type="EMBL" id="AL139327">
    <property type="status" value="NOT_ANNOTATED_CDS"/>
    <property type="molecule type" value="Genomic_DNA"/>
</dbReference>
<dbReference type="EMBL" id="CH471075">
    <property type="protein sequence ID" value="EAX08212.1"/>
    <property type="molecule type" value="Genomic_DNA"/>
</dbReference>
<dbReference type="SMR" id="Q9H521"/>
<dbReference type="BioMuta" id="-"/>
<dbReference type="DMDM" id="74752657"/>
<dbReference type="jPOST" id="Q9H521"/>
<dbReference type="PeptideAtlas" id="Q9H521"/>
<dbReference type="neXtProt" id="NX_Q9H521"/>
<dbReference type="InParanoid" id="Q9H521"/>
<dbReference type="PAN-GO" id="Q9H521">
    <property type="GO annotations" value="6 GO annotations based on evolutionary models"/>
</dbReference>
<dbReference type="PhylomeDB" id="Q9H521"/>
<dbReference type="Pharos" id="Q9H521">
    <property type="development level" value="Tdark"/>
</dbReference>
<dbReference type="Proteomes" id="UP000005640">
    <property type="component" value="Unplaced"/>
</dbReference>
<dbReference type="RNAct" id="Q9H521">
    <property type="molecule type" value="protein"/>
</dbReference>
<dbReference type="InterPro" id="IPR031597">
    <property type="entry name" value="KELK"/>
</dbReference>
<dbReference type="Pfam" id="PF15796">
    <property type="entry name" value="KELK"/>
    <property type="match status" value="1"/>
</dbReference>
<organism>
    <name type="scientific">Homo sapiens</name>
    <name type="common">Human</name>
    <dbReference type="NCBI Taxonomy" id="9606"/>
    <lineage>
        <taxon>Eukaryota</taxon>
        <taxon>Metazoa</taxon>
        <taxon>Chordata</taxon>
        <taxon>Craniata</taxon>
        <taxon>Vertebrata</taxon>
        <taxon>Euteleostomi</taxon>
        <taxon>Mammalia</taxon>
        <taxon>Eutheria</taxon>
        <taxon>Euarchontoglires</taxon>
        <taxon>Primates</taxon>
        <taxon>Haplorrhini</taxon>
        <taxon>Catarrhini</taxon>
        <taxon>Hominidae</taxon>
        <taxon>Homo</taxon>
    </lineage>
</organism>
<feature type="chain" id="PRO_0000321571" description="Putative uncharacterized protein LOC645739">
    <location>
        <begin position="1"/>
        <end position="79"/>
    </location>
</feature>
<feature type="coiled-coil region" evidence="1">
    <location>
        <begin position="4"/>
        <end position="43"/>
    </location>
</feature>
<evidence type="ECO:0000255" key="1"/>
<evidence type="ECO:0000305" key="2"/>
<reference key="1">
    <citation type="journal article" date="2004" name="Nature">
        <title>The DNA sequence and analysis of human chromosome 13.</title>
        <authorList>
            <person name="Dunham A."/>
            <person name="Matthews L.H."/>
            <person name="Burton J."/>
            <person name="Ashurst J.L."/>
            <person name="Howe K.L."/>
            <person name="Ashcroft K.J."/>
            <person name="Beare D.M."/>
            <person name="Burford D.C."/>
            <person name="Hunt S.E."/>
            <person name="Griffiths-Jones S."/>
            <person name="Jones M.C."/>
            <person name="Keenan S.J."/>
            <person name="Oliver K."/>
            <person name="Scott C.E."/>
            <person name="Ainscough R."/>
            <person name="Almeida J.P."/>
            <person name="Ambrose K.D."/>
            <person name="Andrews D.T."/>
            <person name="Ashwell R.I.S."/>
            <person name="Babbage A.K."/>
            <person name="Bagguley C.L."/>
            <person name="Bailey J."/>
            <person name="Bannerjee R."/>
            <person name="Barlow K.F."/>
            <person name="Bates K."/>
            <person name="Beasley H."/>
            <person name="Bird C.P."/>
            <person name="Bray-Allen S."/>
            <person name="Brown A.J."/>
            <person name="Brown J.Y."/>
            <person name="Burrill W."/>
            <person name="Carder C."/>
            <person name="Carter N.P."/>
            <person name="Chapman J.C."/>
            <person name="Clamp M.E."/>
            <person name="Clark S.Y."/>
            <person name="Clarke G."/>
            <person name="Clee C.M."/>
            <person name="Clegg S.C."/>
            <person name="Cobley V."/>
            <person name="Collins J.E."/>
            <person name="Corby N."/>
            <person name="Coville G.J."/>
            <person name="Deloukas P."/>
            <person name="Dhami P."/>
            <person name="Dunham I."/>
            <person name="Dunn M."/>
            <person name="Earthrowl M.E."/>
            <person name="Ellington A.G."/>
            <person name="Faulkner L."/>
            <person name="Frankish A.G."/>
            <person name="Frankland J."/>
            <person name="French L."/>
            <person name="Garner P."/>
            <person name="Garnett J."/>
            <person name="Gilbert J.G.R."/>
            <person name="Gilson C.J."/>
            <person name="Ghori J."/>
            <person name="Grafham D.V."/>
            <person name="Gribble S.M."/>
            <person name="Griffiths C."/>
            <person name="Hall R.E."/>
            <person name="Hammond S."/>
            <person name="Harley J.L."/>
            <person name="Hart E.A."/>
            <person name="Heath P.D."/>
            <person name="Howden P.J."/>
            <person name="Huckle E.J."/>
            <person name="Hunt P.J."/>
            <person name="Hunt A.R."/>
            <person name="Johnson C."/>
            <person name="Johnson D."/>
            <person name="Kay M."/>
            <person name="Kimberley A.M."/>
            <person name="King A."/>
            <person name="Laird G.K."/>
            <person name="Langford C.J."/>
            <person name="Lawlor S."/>
            <person name="Leongamornlert D.A."/>
            <person name="Lloyd D.M."/>
            <person name="Lloyd C."/>
            <person name="Loveland J.E."/>
            <person name="Lovell J."/>
            <person name="Martin S."/>
            <person name="Mashreghi-Mohammadi M."/>
            <person name="McLaren S.J."/>
            <person name="McMurray A."/>
            <person name="Milne S."/>
            <person name="Moore M.J.F."/>
            <person name="Nickerson T."/>
            <person name="Palmer S.A."/>
            <person name="Pearce A.V."/>
            <person name="Peck A.I."/>
            <person name="Pelan S."/>
            <person name="Phillimore B."/>
            <person name="Porter K.M."/>
            <person name="Rice C.M."/>
            <person name="Searle S."/>
            <person name="Sehra H.K."/>
            <person name="Shownkeen R."/>
            <person name="Skuce C.D."/>
            <person name="Smith M."/>
            <person name="Steward C.A."/>
            <person name="Sycamore N."/>
            <person name="Tester J."/>
            <person name="Thomas D.W."/>
            <person name="Tracey A."/>
            <person name="Tromans A."/>
            <person name="Tubby B."/>
            <person name="Wall M."/>
            <person name="Wallis J.M."/>
            <person name="West A.P."/>
            <person name="Whitehead S.L."/>
            <person name="Willey D.L."/>
            <person name="Wilming L."/>
            <person name="Wray P.W."/>
            <person name="Wright M.W."/>
            <person name="Young L."/>
            <person name="Coulson A."/>
            <person name="Durbin R.M."/>
            <person name="Hubbard T."/>
            <person name="Sulston J.E."/>
            <person name="Beck S."/>
            <person name="Bentley D.R."/>
            <person name="Rogers J."/>
            <person name="Ross M.T."/>
        </authorList>
    </citation>
    <scope>NUCLEOTIDE SEQUENCE [LARGE SCALE GENOMIC DNA]</scope>
</reference>
<reference key="2">
    <citation type="submission" date="2005-07" db="EMBL/GenBank/DDBJ databases">
        <authorList>
            <person name="Mural R.J."/>
            <person name="Istrail S."/>
            <person name="Sutton G.G."/>
            <person name="Florea L."/>
            <person name="Halpern A.L."/>
            <person name="Mobarry C.M."/>
            <person name="Lippert R."/>
            <person name="Walenz B."/>
            <person name="Shatkay H."/>
            <person name="Dew I."/>
            <person name="Miller J.R."/>
            <person name="Flanigan M.J."/>
            <person name="Edwards N.J."/>
            <person name="Bolanos R."/>
            <person name="Fasulo D."/>
            <person name="Halldorsson B.V."/>
            <person name="Hannenhalli S."/>
            <person name="Turner R."/>
            <person name="Yooseph S."/>
            <person name="Lu F."/>
            <person name="Nusskern D.R."/>
            <person name="Shue B.C."/>
            <person name="Zheng X.H."/>
            <person name="Zhong F."/>
            <person name="Delcher A.L."/>
            <person name="Huson D.H."/>
            <person name="Kravitz S.A."/>
            <person name="Mouchard L."/>
            <person name="Reinert K."/>
            <person name="Remington K.A."/>
            <person name="Clark A.G."/>
            <person name="Waterman M.S."/>
            <person name="Eichler E.E."/>
            <person name="Adams M.D."/>
            <person name="Hunkapiller M.W."/>
            <person name="Myers E.W."/>
            <person name="Venter J.C."/>
        </authorList>
    </citation>
    <scope>NUCLEOTIDE SEQUENCE [LARGE SCALE GENOMIC DNA]</scope>
</reference>
<accession>Q9H521</accession>
<comment type="caution">
    <text evidence="2">Could be the product of a pseudogene.</text>
</comment>
<sequence length="79" mass="9322">MVWQENEDLRKQLVEASELLKSQAKELKDAHQQQKLALQDFLELCELVAELCSQKQKVWDKEGEMEVAMQKVNTMWQES</sequence>
<protein>
    <recommendedName>
        <fullName>Putative uncharacterized protein LOC645739</fullName>
    </recommendedName>
</protein>
<keyword id="KW-0175">Coiled coil</keyword>
<keyword id="KW-1185">Reference proteome</keyword>
<proteinExistence type="uncertain"/>
<name>YM006_HUMAN</name>